<organism>
    <name type="scientific">Vibrio vulnificus (strain CMCP6)</name>
    <dbReference type="NCBI Taxonomy" id="216895"/>
    <lineage>
        <taxon>Bacteria</taxon>
        <taxon>Pseudomonadati</taxon>
        <taxon>Pseudomonadota</taxon>
        <taxon>Gammaproteobacteria</taxon>
        <taxon>Vibrionales</taxon>
        <taxon>Vibrionaceae</taxon>
        <taxon>Vibrio</taxon>
    </lineage>
</organism>
<name>ZIPA_VIBVU</name>
<evidence type="ECO:0000255" key="1">
    <source>
        <dbReference type="HAMAP-Rule" id="MF_00509"/>
    </source>
</evidence>
<evidence type="ECO:0000256" key="2">
    <source>
        <dbReference type="SAM" id="MobiDB-lite"/>
    </source>
</evidence>
<accession>Q8DFK4</accession>
<gene>
    <name evidence="1" type="primary">zipA</name>
    <name type="ordered locus">VV1_0207</name>
</gene>
<sequence length="311" mass="34665">MQELRFVLIVVGALAIMALLFHGLWTSKKEGKAKFGDKPLSKLDLGESEPKESEMYVAPEDDYEIIRKERKEPAFEDEKPFSTSGVIGDPLIDDLHSGQDKENKFSQPKFDDDITVAEAEAAASIEQDAPAWVEQPQEIDEPLTHHPDEIDAFSGEETIVELDEPMSQTVEPELQVIVLNVHCAGDSPFVGTKLFDSMQQNGLVYGEMDIFHRHLDMSGTGKVLFSVANMMHPGTLKHDDPAEFSTKGISFFMTLPCYGEADQNFNLMLKTAQKIADDLGGNVLDDKRNLMTPDRLAGYRRQIVEFKAANA</sequence>
<protein>
    <recommendedName>
        <fullName evidence="1">Cell division protein ZipA</fullName>
    </recommendedName>
</protein>
<feature type="chain" id="PRO_0000214540" description="Cell division protein ZipA">
    <location>
        <begin position="1"/>
        <end position="311"/>
    </location>
</feature>
<feature type="topological domain" description="Periplasmic" evidence="1">
    <location>
        <begin position="1"/>
        <end position="5"/>
    </location>
</feature>
<feature type="transmembrane region" description="Helical" evidence="1">
    <location>
        <begin position="6"/>
        <end position="26"/>
    </location>
</feature>
<feature type="topological domain" description="Cytoplasmic" evidence="1">
    <location>
        <begin position="27"/>
        <end position="311"/>
    </location>
</feature>
<feature type="region of interest" description="Disordered" evidence="2">
    <location>
        <begin position="32"/>
        <end position="60"/>
    </location>
</feature>
<feature type="compositionally biased region" description="Basic and acidic residues" evidence="2">
    <location>
        <begin position="32"/>
        <end position="54"/>
    </location>
</feature>
<reference key="1">
    <citation type="submission" date="2002-12" db="EMBL/GenBank/DDBJ databases">
        <title>Complete genome sequence of Vibrio vulnificus CMCP6.</title>
        <authorList>
            <person name="Rhee J.H."/>
            <person name="Kim S.Y."/>
            <person name="Chung S.S."/>
            <person name="Kim J.J."/>
            <person name="Moon Y.H."/>
            <person name="Jeong H."/>
            <person name="Choy H.E."/>
        </authorList>
    </citation>
    <scope>NUCLEOTIDE SEQUENCE [LARGE SCALE GENOMIC DNA]</scope>
    <source>
        <strain>CMCP6</strain>
    </source>
</reference>
<proteinExistence type="inferred from homology"/>
<dbReference type="EMBL" id="AE016795">
    <property type="protein sequence ID" value="AAO08744.1"/>
    <property type="molecule type" value="Genomic_DNA"/>
</dbReference>
<dbReference type="RefSeq" id="WP_011078322.1">
    <property type="nucleotide sequence ID" value="NC_004459.3"/>
</dbReference>
<dbReference type="SMR" id="Q8DFK4"/>
<dbReference type="KEGG" id="vvu:VV1_0207"/>
<dbReference type="HOGENOM" id="CLU_030174_1_0_6"/>
<dbReference type="Proteomes" id="UP000002275">
    <property type="component" value="Chromosome 1"/>
</dbReference>
<dbReference type="GO" id="GO:0032153">
    <property type="term" value="C:cell division site"/>
    <property type="evidence" value="ECO:0007669"/>
    <property type="project" value="UniProtKB-UniRule"/>
</dbReference>
<dbReference type="GO" id="GO:0005886">
    <property type="term" value="C:plasma membrane"/>
    <property type="evidence" value="ECO:0007669"/>
    <property type="project" value="UniProtKB-SubCell"/>
</dbReference>
<dbReference type="GO" id="GO:0000917">
    <property type="term" value="P:division septum assembly"/>
    <property type="evidence" value="ECO:0007669"/>
    <property type="project" value="TreeGrafter"/>
</dbReference>
<dbReference type="GO" id="GO:0043093">
    <property type="term" value="P:FtsZ-dependent cytokinesis"/>
    <property type="evidence" value="ECO:0007669"/>
    <property type="project" value="UniProtKB-UniRule"/>
</dbReference>
<dbReference type="FunFam" id="3.30.1400.10:FF:000001">
    <property type="entry name" value="Cell division protein ZipA"/>
    <property type="match status" value="1"/>
</dbReference>
<dbReference type="Gene3D" id="3.30.1400.10">
    <property type="entry name" value="ZipA, C-terminal FtsZ-binding domain"/>
    <property type="match status" value="1"/>
</dbReference>
<dbReference type="HAMAP" id="MF_00509">
    <property type="entry name" value="ZipA"/>
    <property type="match status" value="1"/>
</dbReference>
<dbReference type="InterPro" id="IPR011919">
    <property type="entry name" value="Cell_div_ZipA"/>
</dbReference>
<dbReference type="InterPro" id="IPR007449">
    <property type="entry name" value="ZipA_FtsZ-bd_C"/>
</dbReference>
<dbReference type="InterPro" id="IPR036765">
    <property type="entry name" value="ZipA_FtsZ-bd_C_sf"/>
</dbReference>
<dbReference type="NCBIfam" id="TIGR02205">
    <property type="entry name" value="septum_zipA"/>
    <property type="match status" value="1"/>
</dbReference>
<dbReference type="PANTHER" id="PTHR38685">
    <property type="entry name" value="CELL DIVISION PROTEIN ZIPA"/>
    <property type="match status" value="1"/>
</dbReference>
<dbReference type="PANTHER" id="PTHR38685:SF1">
    <property type="entry name" value="CELL DIVISION PROTEIN ZIPA"/>
    <property type="match status" value="1"/>
</dbReference>
<dbReference type="Pfam" id="PF04354">
    <property type="entry name" value="ZipA_C"/>
    <property type="match status" value="1"/>
</dbReference>
<dbReference type="SMART" id="SM00771">
    <property type="entry name" value="ZipA_C"/>
    <property type="match status" value="1"/>
</dbReference>
<dbReference type="SUPFAM" id="SSF64383">
    <property type="entry name" value="Cell-division protein ZipA, C-terminal domain"/>
    <property type="match status" value="1"/>
</dbReference>
<keyword id="KW-0131">Cell cycle</keyword>
<keyword id="KW-0132">Cell division</keyword>
<keyword id="KW-0997">Cell inner membrane</keyword>
<keyword id="KW-1003">Cell membrane</keyword>
<keyword id="KW-0472">Membrane</keyword>
<keyword id="KW-0812">Transmembrane</keyword>
<keyword id="KW-1133">Transmembrane helix</keyword>
<comment type="function">
    <text evidence="1">Essential cell division protein that stabilizes the FtsZ protofilaments by cross-linking them and that serves as a cytoplasmic membrane anchor for the Z ring. Also required for the recruitment to the septal ring of downstream cell division proteins.</text>
</comment>
<comment type="subunit">
    <text evidence="1">Interacts with FtsZ via their C-terminal domains.</text>
</comment>
<comment type="subcellular location">
    <subcellularLocation>
        <location evidence="1">Cell inner membrane</location>
        <topology evidence="1">Single-pass type I membrane protein</topology>
    </subcellularLocation>
    <text evidence="1">Localizes to the Z ring in an FtsZ-dependent manner.</text>
</comment>
<comment type="similarity">
    <text evidence="1">Belongs to the ZipA family.</text>
</comment>